<protein>
    <recommendedName>
        <fullName>Chaperone protein ClpB</fullName>
    </recommendedName>
</protein>
<sequence>MNIDKYSERVRGFLQSAQTFALAENHQQFSPEHVLKVLLDDEQGMAASLIERAGGDAKEARLANDAALAKLPKVSGGNGGLSLTAPLAKVFSTAEDLAKKAGDSFVTVERLLQALAIESSASTSASLKKAGATAQALNQVINDIRKGRTADSANAEQGFDALKKYARDLTEEAREGRLDPVIGRDDEIRRTIQVLSRRTKNNPVLIGEPGVGKTAIAEGLALRIVNGDVPESLKDKKLMALDMGALIAGAKYRGEFEERLKAVLNEVQAENGGIILFIDEMHTLVGAGKADGAMDASNLLKPALARGELHCVGATTLDEYRKHVEKDPALARRFQPVLVDEPNVEDTISILRGLKEKYEQHHKVRISDSALVAAATLSNRYITDRFLPDKAIDLMDEAASRLRMQVDSKPEELDELDRRIIQLKIEREALKQETDQSSVDRLRKLEDELADTEEKADALTARWQAEKQKLGHAADLKKRLDEARNELAIAQRNGQFQRAGELTYGIIPGLEKELAAAEARDSSGAGSMVQEVVTPDNIAHVVSRWTGIPVDKMLEGQREKLLRMEDELAKSVVGQGEAVQAVSKAVRRSRAGLQDPNRPIGSFIFLGPTGVGKTELTKSLARFLFDDETAMVRLDMSEYMEKHSVARLIGAPPGYVGYEEGGALTEAVRRRPYQVVLFDEIEKAHPDVFNVLLQVLDDGRLTDGQGRTVDFKNTIIIMTSNLGSEFMTQMGDNDDVDSVRELVMERVRSHFRPEFLNRIDDIILFHRLRRDEMGAIVEIQLKRLVSLLADRKITLELDEDARSWLANKGYDPAYGARPLKRVIQKSVQDRLAEMILGGEIPDGSRVKVTSGTDRLLFKVKPAKGEAETETADAA</sequence>
<feature type="chain" id="PRO_0000191084" description="Chaperone protein ClpB">
    <location>
        <begin position="1"/>
        <end position="874"/>
    </location>
</feature>
<feature type="domain" description="Clp R" evidence="2">
    <location>
        <begin position="3"/>
        <end position="147"/>
    </location>
</feature>
<feature type="region of interest" description="Repeat 1" evidence="2">
    <location>
        <begin position="6"/>
        <end position="71"/>
    </location>
</feature>
<feature type="region of interest" description="Repeat 2" evidence="2">
    <location>
        <begin position="83"/>
        <end position="147"/>
    </location>
</feature>
<feature type="region of interest" description="NBD1" evidence="1">
    <location>
        <begin position="160"/>
        <end position="341"/>
    </location>
</feature>
<feature type="region of interest" description="Linker" evidence="1">
    <location>
        <begin position="342"/>
        <end position="547"/>
    </location>
</feature>
<feature type="region of interest" description="NBD2" evidence="1">
    <location>
        <begin position="557"/>
        <end position="767"/>
    </location>
</feature>
<feature type="region of interest" description="C-terminal" evidence="1">
    <location>
        <begin position="768"/>
        <end position="874"/>
    </location>
</feature>
<feature type="coiled-coil region" evidence="1">
    <location>
        <begin position="392"/>
        <end position="526"/>
    </location>
</feature>
<feature type="binding site" evidence="1">
    <location>
        <begin position="207"/>
        <end position="214"/>
    </location>
    <ligand>
        <name>ATP</name>
        <dbReference type="ChEBI" id="CHEBI:30616"/>
        <label>1</label>
    </ligand>
</feature>
<feature type="binding site" evidence="1">
    <location>
        <begin position="607"/>
        <end position="614"/>
    </location>
    <ligand>
        <name>ATP</name>
        <dbReference type="ChEBI" id="CHEBI:30616"/>
        <label>2</label>
    </ligand>
</feature>
<comment type="function">
    <text evidence="1">Part of a stress-induced multi-chaperone system, it is involved in the recovery of the cell from heat-induced damage, in cooperation with DnaK, DnaJ and GrpE. Acts before DnaK, in the processing of protein aggregates. Protein binding stimulates the ATPase activity; ATP hydrolysis unfolds the denatured protein aggregates, which probably helps expose new hydrophobic binding sites on the surface of ClpB-bound aggregates, contributing to the solubilization and refolding of denatured protein aggregates by DnaK (By similarity).</text>
</comment>
<comment type="subunit">
    <text evidence="1">Homohexamer. The oligomerization is ATP-dependent (By similarity).</text>
</comment>
<comment type="subcellular location">
    <subcellularLocation>
        <location evidence="3">Cytoplasm</location>
    </subcellularLocation>
</comment>
<comment type="domain">
    <text evidence="1">The Clp repeat (R) domain probably functions as a substrate-discriminating domain, recruiting aggregated proteins to the ClpB hexamer and/or stabilizing bound proteins. The NBD2 domain is responsible for oligomerization, whereas the NBD1 domain stabilizes the hexamer probably in an ATP-dependent manner. The movement of the coiled-coil domain is essential for ClpB ability to rescue proteins from an aggregated state, probably by pulling apart large aggregated proteins, which are bound between the coiled-coils motifs of adjacent ClpB subunits in the functional hexamer (By similarity).</text>
</comment>
<comment type="similarity">
    <text evidence="3">Belongs to the ClpA/ClpB family.</text>
</comment>
<keyword id="KW-0067">ATP-binding</keyword>
<keyword id="KW-0143">Chaperone</keyword>
<keyword id="KW-0175">Coiled coil</keyword>
<keyword id="KW-0963">Cytoplasm</keyword>
<keyword id="KW-0547">Nucleotide-binding</keyword>
<keyword id="KW-1185">Reference proteome</keyword>
<keyword id="KW-0677">Repeat</keyword>
<keyword id="KW-0346">Stress response</keyword>
<evidence type="ECO:0000250" key="1"/>
<evidence type="ECO:0000255" key="2">
    <source>
        <dbReference type="PROSITE-ProRule" id="PRU01251"/>
    </source>
</evidence>
<evidence type="ECO:0000305" key="3"/>
<gene>
    <name type="primary">clpB</name>
    <name type="ordered locus">Atu4177</name>
    <name type="ORF">AGR_L_1346</name>
</gene>
<organism>
    <name type="scientific">Agrobacterium fabrum (strain C58 / ATCC 33970)</name>
    <name type="common">Agrobacterium tumefaciens (strain C58)</name>
    <dbReference type="NCBI Taxonomy" id="176299"/>
    <lineage>
        <taxon>Bacteria</taxon>
        <taxon>Pseudomonadati</taxon>
        <taxon>Pseudomonadota</taxon>
        <taxon>Alphaproteobacteria</taxon>
        <taxon>Hyphomicrobiales</taxon>
        <taxon>Rhizobiaceae</taxon>
        <taxon>Rhizobium/Agrobacterium group</taxon>
        <taxon>Agrobacterium</taxon>
        <taxon>Agrobacterium tumefaciens complex</taxon>
    </lineage>
</organism>
<accession>Q7CU92</accession>
<accession>Q8U8B5</accession>
<reference key="1">
    <citation type="journal article" date="2001" name="Science">
        <title>The genome of the natural genetic engineer Agrobacterium tumefaciens C58.</title>
        <authorList>
            <person name="Wood D.W."/>
            <person name="Setubal J.C."/>
            <person name="Kaul R."/>
            <person name="Monks D.E."/>
            <person name="Kitajima J.P."/>
            <person name="Okura V.K."/>
            <person name="Zhou Y."/>
            <person name="Chen L."/>
            <person name="Wood G.E."/>
            <person name="Almeida N.F. Jr."/>
            <person name="Woo L."/>
            <person name="Chen Y."/>
            <person name="Paulsen I.T."/>
            <person name="Eisen J.A."/>
            <person name="Karp P.D."/>
            <person name="Bovee D. Sr."/>
            <person name="Chapman P."/>
            <person name="Clendenning J."/>
            <person name="Deatherage G."/>
            <person name="Gillet W."/>
            <person name="Grant C."/>
            <person name="Kutyavin T."/>
            <person name="Levy R."/>
            <person name="Li M.-J."/>
            <person name="McClelland E."/>
            <person name="Palmieri A."/>
            <person name="Raymond C."/>
            <person name="Rouse G."/>
            <person name="Saenphimmachak C."/>
            <person name="Wu Z."/>
            <person name="Romero P."/>
            <person name="Gordon D."/>
            <person name="Zhang S."/>
            <person name="Yoo H."/>
            <person name="Tao Y."/>
            <person name="Biddle P."/>
            <person name="Jung M."/>
            <person name="Krespan W."/>
            <person name="Perry M."/>
            <person name="Gordon-Kamm B."/>
            <person name="Liao L."/>
            <person name="Kim S."/>
            <person name="Hendrick C."/>
            <person name="Zhao Z.-Y."/>
            <person name="Dolan M."/>
            <person name="Chumley F."/>
            <person name="Tingey S.V."/>
            <person name="Tomb J.-F."/>
            <person name="Gordon M.P."/>
            <person name="Olson M.V."/>
            <person name="Nester E.W."/>
        </authorList>
    </citation>
    <scope>NUCLEOTIDE SEQUENCE [LARGE SCALE GENOMIC DNA]</scope>
    <source>
        <strain>C58 / ATCC 33970</strain>
    </source>
</reference>
<reference key="2">
    <citation type="journal article" date="2001" name="Science">
        <title>Genome sequence of the plant pathogen and biotechnology agent Agrobacterium tumefaciens C58.</title>
        <authorList>
            <person name="Goodner B."/>
            <person name="Hinkle G."/>
            <person name="Gattung S."/>
            <person name="Miller N."/>
            <person name="Blanchard M."/>
            <person name="Qurollo B."/>
            <person name="Goldman B.S."/>
            <person name="Cao Y."/>
            <person name="Askenazi M."/>
            <person name="Halling C."/>
            <person name="Mullin L."/>
            <person name="Houmiel K."/>
            <person name="Gordon J."/>
            <person name="Vaudin M."/>
            <person name="Iartchouk O."/>
            <person name="Epp A."/>
            <person name="Liu F."/>
            <person name="Wollam C."/>
            <person name="Allinger M."/>
            <person name="Doughty D."/>
            <person name="Scott C."/>
            <person name="Lappas C."/>
            <person name="Markelz B."/>
            <person name="Flanagan C."/>
            <person name="Crowell C."/>
            <person name="Gurson J."/>
            <person name="Lomo C."/>
            <person name="Sear C."/>
            <person name="Strub G."/>
            <person name="Cielo C."/>
            <person name="Slater S."/>
        </authorList>
    </citation>
    <scope>NUCLEOTIDE SEQUENCE [LARGE SCALE GENOMIC DNA]</scope>
    <source>
        <strain>C58 / ATCC 33970</strain>
    </source>
</reference>
<proteinExistence type="inferred from homology"/>
<dbReference type="EMBL" id="AE007870">
    <property type="protein sequence ID" value="AAK89256.2"/>
    <property type="molecule type" value="Genomic_DNA"/>
</dbReference>
<dbReference type="PIR" id="AC3070">
    <property type="entry name" value="AC3070"/>
</dbReference>
<dbReference type="PIR" id="F98216">
    <property type="entry name" value="F98216"/>
</dbReference>
<dbReference type="RefSeq" id="NP_356471.2">
    <property type="nucleotide sequence ID" value="NC_003063.2"/>
</dbReference>
<dbReference type="RefSeq" id="WP_010973618.1">
    <property type="nucleotide sequence ID" value="NC_003063.2"/>
</dbReference>
<dbReference type="SMR" id="Q7CU92"/>
<dbReference type="STRING" id="176299.Atu4177"/>
<dbReference type="EnsemblBacteria" id="AAK89256">
    <property type="protein sequence ID" value="AAK89256"/>
    <property type="gene ID" value="Atu4177"/>
</dbReference>
<dbReference type="GeneID" id="1136051"/>
<dbReference type="KEGG" id="atu:Atu4177"/>
<dbReference type="PATRIC" id="fig|176299.10.peg.3991"/>
<dbReference type="eggNOG" id="COG0542">
    <property type="taxonomic scope" value="Bacteria"/>
</dbReference>
<dbReference type="HOGENOM" id="CLU_005070_4_1_5"/>
<dbReference type="OrthoDB" id="9803641at2"/>
<dbReference type="PhylomeDB" id="Q7CU92"/>
<dbReference type="BioCyc" id="AGRO:ATU4177-MONOMER"/>
<dbReference type="Proteomes" id="UP000000813">
    <property type="component" value="Chromosome linear"/>
</dbReference>
<dbReference type="GO" id="GO:0005737">
    <property type="term" value="C:cytoplasm"/>
    <property type="evidence" value="ECO:0007669"/>
    <property type="project" value="UniProtKB-SubCell"/>
</dbReference>
<dbReference type="GO" id="GO:0005524">
    <property type="term" value="F:ATP binding"/>
    <property type="evidence" value="ECO:0007669"/>
    <property type="project" value="UniProtKB-KW"/>
</dbReference>
<dbReference type="GO" id="GO:0016887">
    <property type="term" value="F:ATP hydrolysis activity"/>
    <property type="evidence" value="ECO:0007669"/>
    <property type="project" value="InterPro"/>
</dbReference>
<dbReference type="GO" id="GO:0034605">
    <property type="term" value="P:cellular response to heat"/>
    <property type="evidence" value="ECO:0007669"/>
    <property type="project" value="TreeGrafter"/>
</dbReference>
<dbReference type="GO" id="GO:0042026">
    <property type="term" value="P:protein refolding"/>
    <property type="evidence" value="ECO:0007669"/>
    <property type="project" value="InterPro"/>
</dbReference>
<dbReference type="CDD" id="cd00009">
    <property type="entry name" value="AAA"/>
    <property type="match status" value="1"/>
</dbReference>
<dbReference type="CDD" id="cd19499">
    <property type="entry name" value="RecA-like_ClpB_Hsp104-like"/>
    <property type="match status" value="1"/>
</dbReference>
<dbReference type="FunFam" id="1.10.8.60:FF:000017">
    <property type="entry name" value="ATP-dependent chaperone ClpB"/>
    <property type="match status" value="1"/>
</dbReference>
<dbReference type="FunFam" id="3.40.50.300:FF:000120">
    <property type="entry name" value="ATP-dependent chaperone ClpB"/>
    <property type="match status" value="1"/>
</dbReference>
<dbReference type="FunFam" id="3.40.50.300:FF:000025">
    <property type="entry name" value="ATP-dependent Clp protease subunit"/>
    <property type="match status" value="1"/>
</dbReference>
<dbReference type="FunFam" id="3.40.50.300:FF:000010">
    <property type="entry name" value="Chaperone clpB 1, putative"/>
    <property type="match status" value="1"/>
</dbReference>
<dbReference type="Gene3D" id="1.10.8.60">
    <property type="match status" value="1"/>
</dbReference>
<dbReference type="Gene3D" id="1.10.1780.10">
    <property type="entry name" value="Clp, N-terminal domain"/>
    <property type="match status" value="1"/>
</dbReference>
<dbReference type="Gene3D" id="3.40.50.300">
    <property type="entry name" value="P-loop containing nucleotide triphosphate hydrolases"/>
    <property type="match status" value="3"/>
</dbReference>
<dbReference type="InterPro" id="IPR003593">
    <property type="entry name" value="AAA+_ATPase"/>
</dbReference>
<dbReference type="InterPro" id="IPR003959">
    <property type="entry name" value="ATPase_AAA_core"/>
</dbReference>
<dbReference type="InterPro" id="IPR017730">
    <property type="entry name" value="Chaperonin_ClpB"/>
</dbReference>
<dbReference type="InterPro" id="IPR019489">
    <property type="entry name" value="Clp_ATPase_C"/>
</dbReference>
<dbReference type="InterPro" id="IPR036628">
    <property type="entry name" value="Clp_N_dom_sf"/>
</dbReference>
<dbReference type="InterPro" id="IPR004176">
    <property type="entry name" value="Clp_R_dom"/>
</dbReference>
<dbReference type="InterPro" id="IPR001270">
    <property type="entry name" value="ClpA/B"/>
</dbReference>
<dbReference type="InterPro" id="IPR018368">
    <property type="entry name" value="ClpA/B_CS1"/>
</dbReference>
<dbReference type="InterPro" id="IPR028299">
    <property type="entry name" value="ClpA/B_CS2"/>
</dbReference>
<dbReference type="InterPro" id="IPR041546">
    <property type="entry name" value="ClpA/ClpB_AAA_lid"/>
</dbReference>
<dbReference type="InterPro" id="IPR050130">
    <property type="entry name" value="ClpA_ClpB"/>
</dbReference>
<dbReference type="InterPro" id="IPR027417">
    <property type="entry name" value="P-loop_NTPase"/>
</dbReference>
<dbReference type="NCBIfam" id="TIGR03346">
    <property type="entry name" value="chaperone_ClpB"/>
    <property type="match status" value="1"/>
</dbReference>
<dbReference type="PANTHER" id="PTHR11638">
    <property type="entry name" value="ATP-DEPENDENT CLP PROTEASE"/>
    <property type="match status" value="1"/>
</dbReference>
<dbReference type="PANTHER" id="PTHR11638:SF18">
    <property type="entry name" value="HEAT SHOCK PROTEIN 104"/>
    <property type="match status" value="1"/>
</dbReference>
<dbReference type="Pfam" id="PF00004">
    <property type="entry name" value="AAA"/>
    <property type="match status" value="1"/>
</dbReference>
<dbReference type="Pfam" id="PF07724">
    <property type="entry name" value="AAA_2"/>
    <property type="match status" value="1"/>
</dbReference>
<dbReference type="Pfam" id="PF17871">
    <property type="entry name" value="AAA_lid_9"/>
    <property type="match status" value="1"/>
</dbReference>
<dbReference type="Pfam" id="PF02861">
    <property type="entry name" value="Clp_N"/>
    <property type="match status" value="2"/>
</dbReference>
<dbReference type="Pfam" id="PF10431">
    <property type="entry name" value="ClpB_D2-small"/>
    <property type="match status" value="1"/>
</dbReference>
<dbReference type="PRINTS" id="PR00300">
    <property type="entry name" value="CLPPROTEASEA"/>
</dbReference>
<dbReference type="SMART" id="SM00382">
    <property type="entry name" value="AAA"/>
    <property type="match status" value="2"/>
</dbReference>
<dbReference type="SMART" id="SM01086">
    <property type="entry name" value="ClpB_D2-small"/>
    <property type="match status" value="1"/>
</dbReference>
<dbReference type="SUPFAM" id="SSF81923">
    <property type="entry name" value="Double Clp-N motif"/>
    <property type="match status" value="1"/>
</dbReference>
<dbReference type="SUPFAM" id="SSF52540">
    <property type="entry name" value="P-loop containing nucleoside triphosphate hydrolases"/>
    <property type="match status" value="2"/>
</dbReference>
<dbReference type="PROSITE" id="PS51903">
    <property type="entry name" value="CLP_R"/>
    <property type="match status" value="1"/>
</dbReference>
<dbReference type="PROSITE" id="PS00870">
    <property type="entry name" value="CLPAB_1"/>
    <property type="match status" value="1"/>
</dbReference>
<dbReference type="PROSITE" id="PS00871">
    <property type="entry name" value="CLPAB_2"/>
    <property type="match status" value="1"/>
</dbReference>
<name>CLPB_AGRFC</name>